<dbReference type="EC" id="5.1.1.7" evidence="1"/>
<dbReference type="EMBL" id="AE016795">
    <property type="protein sequence ID" value="AAO09602.2"/>
    <property type="molecule type" value="Genomic_DNA"/>
</dbReference>
<dbReference type="RefSeq" id="WP_011079142.1">
    <property type="nucleotide sequence ID" value="NC_004459.3"/>
</dbReference>
<dbReference type="SMR" id="Q8DD81"/>
<dbReference type="KEGG" id="vvu:VV1_1127"/>
<dbReference type="HOGENOM" id="CLU_053306_1_1_6"/>
<dbReference type="UniPathway" id="UPA00034">
    <property type="reaction ID" value="UER00025"/>
</dbReference>
<dbReference type="Proteomes" id="UP000002275">
    <property type="component" value="Chromosome 1"/>
</dbReference>
<dbReference type="GO" id="GO:0005829">
    <property type="term" value="C:cytosol"/>
    <property type="evidence" value="ECO:0007669"/>
    <property type="project" value="TreeGrafter"/>
</dbReference>
<dbReference type="GO" id="GO:0008837">
    <property type="term" value="F:diaminopimelate epimerase activity"/>
    <property type="evidence" value="ECO:0007669"/>
    <property type="project" value="UniProtKB-UniRule"/>
</dbReference>
<dbReference type="GO" id="GO:0009089">
    <property type="term" value="P:lysine biosynthetic process via diaminopimelate"/>
    <property type="evidence" value="ECO:0007669"/>
    <property type="project" value="UniProtKB-UniRule"/>
</dbReference>
<dbReference type="FunFam" id="3.10.310.10:FF:000001">
    <property type="entry name" value="Diaminopimelate epimerase"/>
    <property type="match status" value="1"/>
</dbReference>
<dbReference type="FunFam" id="3.10.310.10:FF:000002">
    <property type="entry name" value="Diaminopimelate epimerase"/>
    <property type="match status" value="1"/>
</dbReference>
<dbReference type="Gene3D" id="3.10.310.10">
    <property type="entry name" value="Diaminopimelate Epimerase, Chain A, domain 1"/>
    <property type="match status" value="2"/>
</dbReference>
<dbReference type="HAMAP" id="MF_00197">
    <property type="entry name" value="DAP_epimerase"/>
    <property type="match status" value="1"/>
</dbReference>
<dbReference type="InterPro" id="IPR018510">
    <property type="entry name" value="DAP_epimerase_AS"/>
</dbReference>
<dbReference type="InterPro" id="IPR001653">
    <property type="entry name" value="DAP_epimerase_DapF"/>
</dbReference>
<dbReference type="NCBIfam" id="TIGR00652">
    <property type="entry name" value="DapF"/>
    <property type="match status" value="1"/>
</dbReference>
<dbReference type="PANTHER" id="PTHR31689:SF0">
    <property type="entry name" value="DIAMINOPIMELATE EPIMERASE"/>
    <property type="match status" value="1"/>
</dbReference>
<dbReference type="PANTHER" id="PTHR31689">
    <property type="entry name" value="DIAMINOPIMELATE EPIMERASE, CHLOROPLASTIC"/>
    <property type="match status" value="1"/>
</dbReference>
<dbReference type="Pfam" id="PF01678">
    <property type="entry name" value="DAP_epimerase"/>
    <property type="match status" value="2"/>
</dbReference>
<dbReference type="SUPFAM" id="SSF54506">
    <property type="entry name" value="Diaminopimelate epimerase-like"/>
    <property type="match status" value="1"/>
</dbReference>
<dbReference type="PROSITE" id="PS01326">
    <property type="entry name" value="DAP_EPIMERASE"/>
    <property type="match status" value="1"/>
</dbReference>
<protein>
    <recommendedName>
        <fullName evidence="1">Diaminopimelate epimerase</fullName>
        <shortName evidence="1">DAP epimerase</shortName>
        <ecNumber evidence="1">5.1.1.7</ecNumber>
    </recommendedName>
    <alternativeName>
        <fullName evidence="1">PLP-independent amino acid racemase</fullName>
    </alternativeName>
</protein>
<keyword id="KW-0028">Amino-acid biosynthesis</keyword>
<keyword id="KW-0963">Cytoplasm</keyword>
<keyword id="KW-0413">Isomerase</keyword>
<keyword id="KW-0457">Lysine biosynthesis</keyword>
<proteinExistence type="inferred from homology"/>
<feature type="chain" id="PRO_0000149877" description="Diaminopimelate epimerase">
    <location>
        <begin position="1"/>
        <end position="276"/>
    </location>
</feature>
<feature type="active site" description="Proton donor" evidence="1">
    <location>
        <position position="75"/>
    </location>
</feature>
<feature type="active site" description="Proton acceptor" evidence="1">
    <location>
        <position position="219"/>
    </location>
</feature>
<feature type="binding site" evidence="1">
    <location>
        <position position="13"/>
    </location>
    <ligand>
        <name>substrate</name>
    </ligand>
</feature>
<feature type="binding site" evidence="1">
    <location>
        <position position="46"/>
    </location>
    <ligand>
        <name>substrate</name>
    </ligand>
</feature>
<feature type="binding site" evidence="1">
    <location>
        <position position="66"/>
    </location>
    <ligand>
        <name>substrate</name>
    </ligand>
</feature>
<feature type="binding site" evidence="1">
    <location>
        <begin position="76"/>
        <end position="77"/>
    </location>
    <ligand>
        <name>substrate</name>
    </ligand>
</feature>
<feature type="binding site" evidence="1">
    <location>
        <position position="159"/>
    </location>
    <ligand>
        <name>substrate</name>
    </ligand>
</feature>
<feature type="binding site" evidence="1">
    <location>
        <position position="192"/>
    </location>
    <ligand>
        <name>substrate</name>
    </ligand>
</feature>
<feature type="binding site" evidence="1">
    <location>
        <begin position="210"/>
        <end position="211"/>
    </location>
    <ligand>
        <name>substrate</name>
    </ligand>
</feature>
<feature type="binding site" evidence="1">
    <location>
        <begin position="220"/>
        <end position="221"/>
    </location>
    <ligand>
        <name>substrate</name>
    </ligand>
</feature>
<feature type="site" description="Could be important to modulate the pK values of the two catalytic cysteine residues" evidence="1">
    <location>
        <position position="161"/>
    </location>
</feature>
<feature type="site" description="Could be important to modulate the pK values of the two catalytic cysteine residues" evidence="1">
    <location>
        <position position="210"/>
    </location>
</feature>
<feature type="site" description="Important for dimerization" evidence="1">
    <location>
        <position position="270"/>
    </location>
</feature>
<evidence type="ECO:0000255" key="1">
    <source>
        <dbReference type="HAMAP-Rule" id="MF_00197"/>
    </source>
</evidence>
<sequence>MHFHFSKMHGLGNDFMVVDCITQNVYFSQELIRRLADRHTGVGFDQLLVVEAPYDPETDFHYRIFNADGSEVEQCGNGARCFARFVRMKGLTNKYSISVSTKKGKMILDVEEDDQITVNMGVPEFEPNKIPFRAKQKEKTYIMRVGEKTLFCGAVSMGNPHVVTVVDDVDSAEVETLGPLLESHERFPERVNAGFMQVVNREQIRLRVYERGAGETQACGSGACGAVAVGILQGLLDENVTVSLPGGDLHIHWQGPGKPLYMTGPATHVFDGQLSC</sequence>
<accession>Q8DD81</accession>
<comment type="function">
    <text evidence="1">Catalyzes the stereoinversion of LL-2,6-diaminopimelate (L,L-DAP) to meso-diaminopimelate (meso-DAP), a precursor of L-lysine and an essential component of the bacterial peptidoglycan.</text>
</comment>
<comment type="catalytic activity">
    <reaction evidence="1">
        <text>(2S,6S)-2,6-diaminopimelate = meso-2,6-diaminopimelate</text>
        <dbReference type="Rhea" id="RHEA:15393"/>
        <dbReference type="ChEBI" id="CHEBI:57609"/>
        <dbReference type="ChEBI" id="CHEBI:57791"/>
        <dbReference type="EC" id="5.1.1.7"/>
    </reaction>
</comment>
<comment type="pathway">
    <text evidence="1">Amino-acid biosynthesis; L-lysine biosynthesis via DAP pathway; DL-2,6-diaminopimelate from LL-2,6-diaminopimelate: step 1/1.</text>
</comment>
<comment type="subunit">
    <text evidence="1">Homodimer.</text>
</comment>
<comment type="subcellular location">
    <subcellularLocation>
        <location evidence="1">Cytoplasm</location>
    </subcellularLocation>
</comment>
<comment type="similarity">
    <text evidence="1">Belongs to the diaminopimelate epimerase family.</text>
</comment>
<gene>
    <name evidence="1" type="primary">dapF</name>
    <name type="ordered locus">VV1_1127</name>
</gene>
<reference key="1">
    <citation type="submission" date="2002-12" db="EMBL/GenBank/DDBJ databases">
        <title>Complete genome sequence of Vibrio vulnificus CMCP6.</title>
        <authorList>
            <person name="Rhee J.H."/>
            <person name="Kim S.Y."/>
            <person name="Chung S.S."/>
            <person name="Kim J.J."/>
            <person name="Moon Y.H."/>
            <person name="Jeong H."/>
            <person name="Choy H.E."/>
        </authorList>
    </citation>
    <scope>NUCLEOTIDE SEQUENCE [LARGE SCALE GENOMIC DNA]</scope>
    <source>
        <strain>CMCP6</strain>
    </source>
</reference>
<name>DAPF_VIBVU</name>
<organism>
    <name type="scientific">Vibrio vulnificus (strain CMCP6)</name>
    <dbReference type="NCBI Taxonomy" id="216895"/>
    <lineage>
        <taxon>Bacteria</taxon>
        <taxon>Pseudomonadati</taxon>
        <taxon>Pseudomonadota</taxon>
        <taxon>Gammaproteobacteria</taxon>
        <taxon>Vibrionales</taxon>
        <taxon>Vibrionaceae</taxon>
        <taxon>Vibrio</taxon>
    </lineage>
</organism>